<protein>
    <recommendedName>
        <fullName>WPP domain-associated protein</fullName>
    </recommendedName>
</protein>
<evidence type="ECO:0000255" key="1"/>
<evidence type="ECO:0000269" key="2">
    <source>
    </source>
</evidence>
<gene>
    <name type="primary">WAP</name>
</gene>
<accession>Q5BQN5</accession>
<comment type="subunit">
    <text evidence="2">Interacts with MAF1.</text>
</comment>
<comment type="subcellular location">
    <subcellularLocation>
        <location evidence="2">Golgi apparatus</location>
    </subcellularLocation>
    <subcellularLocation>
        <location evidence="2">Cytoplasm</location>
    </subcellularLocation>
    <text>Accumulate in speckles of the cytoplasm belonging to the Golgi apparatus.</text>
</comment>
<comment type="tissue specificity">
    <text evidence="2">Expressed in seedlings, leaves and fruits.</text>
</comment>
<keyword id="KW-0175">Coiled coil</keyword>
<keyword id="KW-0963">Cytoplasm</keyword>
<keyword id="KW-0333">Golgi apparatus</keyword>
<keyword id="KW-1185">Reference proteome</keyword>
<proteinExistence type="evidence at protein level"/>
<feature type="chain" id="PRO_0000347189" description="WPP domain-associated protein">
    <location>
        <begin position="1" status="less than"/>
        <end position="834"/>
    </location>
</feature>
<feature type="coiled-coil region" evidence="1">
    <location>
        <begin position="410"/>
        <end position="456"/>
    </location>
</feature>
<feature type="coiled-coil region" evidence="1">
    <location>
        <begin position="574"/>
        <end position="700"/>
    </location>
</feature>
<feature type="coiled-coil region" evidence="1">
    <location>
        <begin position="792"/>
        <end position="812"/>
    </location>
</feature>
<feature type="non-terminal residue">
    <location>
        <position position="1"/>
    </location>
</feature>
<reference key="1">
    <citation type="journal article" date="2005" name="Planta">
        <title>The plant nuclear envelope protein MAF1 has an additional location at the Golgi and binds to a novel Golgi-associated coiled-coil protein.</title>
        <authorList>
            <person name="Patel S."/>
            <person name="Brkljacic J."/>
            <person name="Gindullis F."/>
            <person name="Rose A."/>
            <person name="Meier I."/>
        </authorList>
    </citation>
    <scope>NUCLEOTIDE SEQUENCE [MRNA]</scope>
    <scope>INTERACTION WITH MAF1</scope>
    <scope>TISSUE SPECIFICITY</scope>
    <scope>SUBCELLULAR LOCATION</scope>
</reference>
<organism>
    <name type="scientific">Solanum lycopersicum</name>
    <name type="common">Tomato</name>
    <name type="synonym">Lycopersicon esculentum</name>
    <dbReference type="NCBI Taxonomy" id="4081"/>
    <lineage>
        <taxon>Eukaryota</taxon>
        <taxon>Viridiplantae</taxon>
        <taxon>Streptophyta</taxon>
        <taxon>Embryophyta</taxon>
        <taxon>Tracheophyta</taxon>
        <taxon>Spermatophyta</taxon>
        <taxon>Magnoliopsida</taxon>
        <taxon>eudicotyledons</taxon>
        <taxon>Gunneridae</taxon>
        <taxon>Pentapetalae</taxon>
        <taxon>asterids</taxon>
        <taxon>lamiids</taxon>
        <taxon>Solanales</taxon>
        <taxon>Solanaceae</taxon>
        <taxon>Solanoideae</taxon>
        <taxon>Solaneae</taxon>
        <taxon>Solanum</taxon>
        <taxon>Solanum subgen. Lycopersicon</taxon>
    </lineage>
</organism>
<sequence length="834" mass="95457">ENENLGDEILEDFETYWEDVNDRLMVSRMVSDSVIKGIVSAVEQEAAERLVTKDMELANLKEYLQFHEGGLSKTELESFGSLMSQNELESMDFRKCMTLSDVFMEHGKMGEFLDGLRSLAKDEFKKLKKSIDELRGSNSVSNKISRSEMAKLEGILQEKESGIWVQLDKTLDNIRMMVDTVFKRMDVMLQLSKTSLHHWQEEHLIKVELESMVMQCVIRTVQEEFEYKLWDQYAQLCGDRNEKLNAISSLRTELDAVLKSLSSSENGHVTSHGSHDADFFTRKKSSEYVTSTKSVWDGNGKLEDSKTDIPENFDAVTLKHMSKDEMVTYFNNIMTKMKRHHESILQKKTDEYFVLRAEYLNLRGGSVVPHKKDKGESDILRKKIPEIIFKLDDILVENEKHPAFTQETLSFGNLKDRLDNLLSENHQLRDLVKEKKNEVKSLLSQVSDATEKRLQHSLAEAGMLKQIGELNLAMEESLIGGSVREDVYTCFLRDLSGGARNEVEELNLGFNMINESNDTSAGSTRKIEIEDLEMECLIMQEICGVISGEGIKEAKDMLKELYLEHLNEKEIRTSLDTKLIEMENKLKFEVEEKDRLMQMEKLVNEKEKLATDASAALAKERVQSEQVRQELNAAKEFASQQQTLASGCNKEVNVIKGQLAEAVERIEVLKEEVAQLNISLEEKTEELKEANHRANMVLAISEERQTLLSSLESKEIALRKQVEKIIGNINESSKMIADFECRVTGRLKTNNARFEHSFSQMDCLVKKANLLRRTTLLYQQRLEKRCSDLKLAEAEVDLLGDEVDTLLSLVEKIYIALDHYSPVLQHYPGDYGDS</sequence>
<dbReference type="EMBL" id="AY917129">
    <property type="protein sequence ID" value="AAX19941.1"/>
    <property type="molecule type" value="mRNA"/>
</dbReference>
<dbReference type="SMR" id="Q5BQN5"/>
<dbReference type="FunCoup" id="Q5BQN5">
    <property type="interactions" value="550"/>
</dbReference>
<dbReference type="STRING" id="4081.Q5BQN5"/>
<dbReference type="PaxDb" id="4081-Solyc02g069940.2.1"/>
<dbReference type="eggNOG" id="ENOG502QPVR">
    <property type="taxonomic scope" value="Eukaryota"/>
</dbReference>
<dbReference type="InParanoid" id="Q5BQN5"/>
<dbReference type="Proteomes" id="UP000004994">
    <property type="component" value="Unplaced"/>
</dbReference>
<dbReference type="ExpressionAtlas" id="Q5BQN5">
    <property type="expression patterns" value="baseline"/>
</dbReference>
<dbReference type="GO" id="GO:0005794">
    <property type="term" value="C:Golgi apparatus"/>
    <property type="evidence" value="ECO:0007669"/>
    <property type="project" value="UniProtKB-SubCell"/>
</dbReference>
<dbReference type="InterPro" id="IPR037490">
    <property type="entry name" value="WAP"/>
</dbReference>
<dbReference type="PANTHER" id="PTHR33883">
    <property type="entry name" value="WPP DOMAIN-ASSOCIATED PROTEIN"/>
    <property type="match status" value="1"/>
</dbReference>
<dbReference type="PANTHER" id="PTHR33883:SF9">
    <property type="entry name" value="WPP DOMAIN-ASSOCIATED PROTEIN-LIKE"/>
    <property type="match status" value="1"/>
</dbReference>
<name>WAP_SOLLC</name>